<proteinExistence type="evidence at transcript level"/>
<organism>
    <name type="scientific">Rattus norvegicus</name>
    <name type="common">Rat</name>
    <dbReference type="NCBI Taxonomy" id="10116"/>
    <lineage>
        <taxon>Eukaryota</taxon>
        <taxon>Metazoa</taxon>
        <taxon>Chordata</taxon>
        <taxon>Craniata</taxon>
        <taxon>Vertebrata</taxon>
        <taxon>Euteleostomi</taxon>
        <taxon>Mammalia</taxon>
        <taxon>Eutheria</taxon>
        <taxon>Euarchontoglires</taxon>
        <taxon>Glires</taxon>
        <taxon>Rodentia</taxon>
        <taxon>Myomorpha</taxon>
        <taxon>Muroidea</taxon>
        <taxon>Muridae</taxon>
        <taxon>Murinae</taxon>
        <taxon>Rattus</taxon>
    </lineage>
</organism>
<protein>
    <recommendedName>
        <fullName>Myosin light chain 4</fullName>
    </recommendedName>
    <alternativeName>
        <fullName>Myosin light chain 1, atrial isoform</fullName>
    </alternativeName>
</protein>
<comment type="function">
    <text evidence="4">Regulatory light chain of myosin. Does not bind calcium.</text>
</comment>
<comment type="subunit">
    <text>Myosin is a hexamer of 2 heavy chains and 4 light chains.</text>
</comment>
<dbReference type="EMBL" id="X51531">
    <property type="protein sequence ID" value="CAA35911.1"/>
    <property type="molecule type" value="mRNA"/>
</dbReference>
<dbReference type="PIR" id="S09236">
    <property type="entry name" value="MORT4E"/>
</dbReference>
<dbReference type="SMR" id="P17209"/>
<dbReference type="FunCoup" id="P17209">
    <property type="interactions" value="109"/>
</dbReference>
<dbReference type="IntAct" id="P17209">
    <property type="interactions" value="1"/>
</dbReference>
<dbReference type="STRING" id="10116.ENSRNOP00000064224"/>
<dbReference type="iPTMnet" id="P17209"/>
<dbReference type="PhosphoSitePlus" id="P17209"/>
<dbReference type="SwissPalm" id="P17209"/>
<dbReference type="PaxDb" id="10116-ENSRNOP00000064224"/>
<dbReference type="AGR" id="RGD:1591197"/>
<dbReference type="RGD" id="1591197">
    <property type="gene designation" value="Myl4"/>
</dbReference>
<dbReference type="eggNOG" id="KOG0030">
    <property type="taxonomic scope" value="Eukaryota"/>
</dbReference>
<dbReference type="InParanoid" id="P17209"/>
<dbReference type="PhylomeDB" id="P17209"/>
<dbReference type="Reactome" id="R-RNO-390522">
    <property type="pathway name" value="Striated Muscle Contraction"/>
</dbReference>
<dbReference type="PRO" id="PR:P17209"/>
<dbReference type="Proteomes" id="UP000002494">
    <property type="component" value="Unplaced"/>
</dbReference>
<dbReference type="GO" id="GO:0031672">
    <property type="term" value="C:A band"/>
    <property type="evidence" value="ECO:0000266"/>
    <property type="project" value="RGD"/>
</dbReference>
<dbReference type="GO" id="GO:0016460">
    <property type="term" value="C:myosin II complex"/>
    <property type="evidence" value="ECO:0000318"/>
    <property type="project" value="GO_Central"/>
</dbReference>
<dbReference type="GO" id="GO:0051015">
    <property type="term" value="F:actin filament binding"/>
    <property type="evidence" value="ECO:0000266"/>
    <property type="project" value="RGD"/>
</dbReference>
<dbReference type="GO" id="GO:0003785">
    <property type="term" value="F:actin monomer binding"/>
    <property type="evidence" value="ECO:0000266"/>
    <property type="project" value="RGD"/>
</dbReference>
<dbReference type="GO" id="GO:0005509">
    <property type="term" value="F:calcium ion binding"/>
    <property type="evidence" value="ECO:0007669"/>
    <property type="project" value="InterPro"/>
</dbReference>
<dbReference type="GO" id="GO:0060048">
    <property type="term" value="P:cardiac muscle contraction"/>
    <property type="evidence" value="ECO:0000266"/>
    <property type="project" value="RGD"/>
</dbReference>
<dbReference type="GO" id="GO:0002026">
    <property type="term" value="P:regulation of the force of heart contraction"/>
    <property type="evidence" value="ECO:0000266"/>
    <property type="project" value="RGD"/>
</dbReference>
<dbReference type="CDD" id="cd00051">
    <property type="entry name" value="EFh"/>
    <property type="match status" value="1"/>
</dbReference>
<dbReference type="FunFam" id="1.10.238.10:FF:000019">
    <property type="entry name" value="Myosin light chain 1 skeletal"/>
    <property type="match status" value="1"/>
</dbReference>
<dbReference type="FunFam" id="1.10.238.10:FF:000056">
    <property type="entry name" value="Myosin light chain 1 skeletal"/>
    <property type="match status" value="1"/>
</dbReference>
<dbReference type="Gene3D" id="1.10.238.10">
    <property type="entry name" value="EF-hand"/>
    <property type="match status" value="2"/>
</dbReference>
<dbReference type="InterPro" id="IPR050230">
    <property type="entry name" value="CALM/Myosin/TropC-like"/>
</dbReference>
<dbReference type="InterPro" id="IPR011992">
    <property type="entry name" value="EF-hand-dom_pair"/>
</dbReference>
<dbReference type="InterPro" id="IPR002048">
    <property type="entry name" value="EF_hand_dom"/>
</dbReference>
<dbReference type="PANTHER" id="PTHR23048">
    <property type="entry name" value="MYOSIN LIGHT CHAIN 1, 3"/>
    <property type="match status" value="1"/>
</dbReference>
<dbReference type="PANTHER" id="PTHR23048:SF1">
    <property type="entry name" value="MYOSIN LIGHT CHAIN 4"/>
    <property type="match status" value="1"/>
</dbReference>
<dbReference type="SUPFAM" id="SSF47473">
    <property type="entry name" value="EF-hand"/>
    <property type="match status" value="1"/>
</dbReference>
<dbReference type="PROSITE" id="PS50222">
    <property type="entry name" value="EF_HAND_2"/>
    <property type="match status" value="2"/>
</dbReference>
<accession>P17209</accession>
<feature type="initiator methionine" description="Removed" evidence="1">
    <location>
        <position position="1"/>
    </location>
</feature>
<feature type="chain" id="PRO_0000198701" description="Myosin light chain 4">
    <location>
        <begin position="2"/>
        <end position="193"/>
    </location>
</feature>
<feature type="domain" description="EF-hand 1" evidence="2">
    <location>
        <begin position="47"/>
        <end position="84"/>
    </location>
</feature>
<feature type="domain" description="EF-hand 2" evidence="2">
    <location>
        <begin position="126"/>
        <end position="161"/>
    </location>
</feature>
<feature type="region of interest" description="Disordered" evidence="3">
    <location>
        <begin position="1"/>
        <end position="36"/>
    </location>
</feature>
<feature type="compositionally biased region" description="Basic and acidic residues" evidence="3">
    <location>
        <begin position="1"/>
        <end position="13"/>
    </location>
</feature>
<feature type="modified residue" description="N,N-dimethylproline" evidence="1">
    <location>
        <position position="2"/>
    </location>
</feature>
<reference key="1">
    <citation type="journal article" date="1990" name="Nucleic Acids Res.">
        <title>Complete cDNA sequence of rat atrial myosin light chain 1: patterns of expression during development and with hypertension.</title>
        <authorList>
            <person name="Rovner A.S."/>
            <person name="McNally E.M."/>
            <person name="Leinwand L.A."/>
        </authorList>
    </citation>
    <scope>NUCLEOTIDE SEQUENCE [MRNA]</scope>
    <source>
        <strain>Wistar</strain>
        <tissue>Heart</tissue>
    </source>
</reference>
<keyword id="KW-0488">Methylation</keyword>
<keyword id="KW-0505">Motor protein</keyword>
<keyword id="KW-0514">Muscle protein</keyword>
<keyword id="KW-0518">Myosin</keyword>
<keyword id="KW-1185">Reference proteome</keyword>
<keyword id="KW-0677">Repeat</keyword>
<gene>
    <name type="primary">Myl4</name>
</gene>
<name>MYL4_RAT</name>
<evidence type="ECO:0000250" key="1">
    <source>
        <dbReference type="UniProtKB" id="F1RRT2"/>
    </source>
</evidence>
<evidence type="ECO:0000255" key="2">
    <source>
        <dbReference type="PROSITE-ProRule" id="PRU00448"/>
    </source>
</evidence>
<evidence type="ECO:0000256" key="3">
    <source>
        <dbReference type="SAM" id="MobiDB-lite"/>
    </source>
</evidence>
<evidence type="ECO:0000305" key="4"/>
<sequence length="193" mass="21282">MPPKKPEPKKETAKVAAAPAPAPAPAPEPLRDSAFDPKSVKIDFSADQIEEFKEAFSLFDRTPTGEMKITYGQCGDVLRALGQNPTNAEVLRVLGKPKPEEMNSKTLDFEMFLPILQHISRNKEQGTYEDFVEGLRVFDKESNGTVMGAELRHVLATLGEKMSEAEVEQLLTGQEDANGCINYEAFVKHVMSG</sequence>